<proteinExistence type="evidence at protein level"/>
<comment type="function">
    <text evidence="1">Plays a role in female and male fertility. Involved in distal reproductive tract development.</text>
</comment>
<comment type="interaction">
    <interactant intactId="EBI-17566767">
        <id>Q6ZUX7</id>
    </interactant>
    <interactant intactId="EBI-713304">
        <id>Q9H0Q3</id>
        <label>FXYD6</label>
    </interactant>
    <organismsDiffer>false</organismsDiffer>
    <experiments>3</experiments>
</comment>
<comment type="interaction">
    <interactant intactId="EBI-17566767">
        <id>Q6ZUX7</id>
    </interactant>
    <interactant intactId="EBI-3436637">
        <id>P01350</id>
        <label>GAST</label>
    </interactant>
    <organismsDiffer>false</organismsDiffer>
    <experiments>3</experiments>
</comment>
<comment type="interaction">
    <interactant intactId="EBI-17566767">
        <id>Q6ZUX7</id>
    </interactant>
    <interactant intactId="EBI-750433">
        <id>P36382</id>
        <label>GJA5</label>
    </interactant>
    <organismsDiffer>false</organismsDiffer>
    <experiments>3</experiments>
</comment>
<comment type="interaction">
    <interactant intactId="EBI-17566767">
        <id>Q6ZUX7</id>
    </interactant>
    <interactant intactId="EBI-17565645">
        <id>P08034</id>
        <label>GJB1</label>
    </interactant>
    <organismsDiffer>false</organismsDiffer>
    <experiments>3</experiments>
</comment>
<comment type="interaction">
    <interactant intactId="EBI-17566767">
        <id>Q6ZUX7</id>
    </interactant>
    <interactant intactId="EBI-13345167">
        <id>Q8TDT2</id>
        <label>GPR152</label>
    </interactant>
    <organismsDiffer>false</organismsDiffer>
    <experiments>3</experiments>
</comment>
<comment type="interaction">
    <interactant intactId="EBI-17566767">
        <id>Q6ZUX7</id>
    </interactant>
    <interactant intactId="EBI-2804156">
        <id>Q6UX06</id>
        <label>OLFM4</label>
    </interactant>
    <organismsDiffer>false</organismsDiffer>
    <experiments>3</experiments>
</comment>
<comment type="interaction">
    <interactant intactId="EBI-17566767">
        <id>Q6ZUX7</id>
    </interactant>
    <interactant intactId="EBI-12056025">
        <id>Q14162</id>
        <label>SCARF1</label>
    </interactant>
    <organismsDiffer>false</organismsDiffer>
    <experiments>3</experiments>
</comment>
<comment type="interaction">
    <interactant intactId="EBI-17566767">
        <id>Q6ZUX7</id>
    </interactant>
    <interactant intactId="EBI-11957067">
        <id>Q6UX34</id>
        <label>SNORC</label>
    </interactant>
    <organismsDiffer>false</organismsDiffer>
    <experiments>3</experiments>
</comment>
<comment type="interaction">
    <interactant intactId="EBI-17566767">
        <id>Q6ZUX7</id>
    </interactant>
    <interactant intactId="EBI-10694905">
        <id>Q5BJH2-2</id>
        <label>TMEM128</label>
    </interactant>
    <organismsDiffer>false</organismsDiffer>
    <experiments>3</experiments>
</comment>
<comment type="interaction">
    <interactant intactId="EBI-17566767">
        <id>Q6ZUX7</id>
    </interactant>
    <interactant intactId="EBI-348587">
        <id>Q9BVK8</id>
        <label>TMEM147</label>
    </interactant>
    <organismsDiffer>false</organismsDiffer>
    <experiments>3</experiments>
</comment>
<comment type="subcellular location">
    <subcellularLocation>
        <location evidence="4">Membrane</location>
        <topology evidence="4">Multi-pass membrane protein</topology>
    </subcellularLocation>
</comment>
<comment type="tissue specificity">
    <text evidence="3">Expressed in all tissues and cell lines examined except brain and peripheral blood leukocytes.</text>
</comment>
<comment type="similarity">
    <text evidence="4">Belongs to the LHFP family.</text>
</comment>
<evidence type="ECO:0000250" key="1">
    <source>
        <dbReference type="UniProtKB" id="Q8BGA2"/>
    </source>
</evidence>
<evidence type="ECO:0000255" key="2"/>
<evidence type="ECO:0000269" key="3">
    <source>
    </source>
</evidence>
<evidence type="ECO:0000305" key="4"/>
<evidence type="ECO:0000312" key="5">
    <source>
        <dbReference type="HGNC" id="HGNC:6588"/>
    </source>
</evidence>
<name>LHPL2_HUMAN</name>
<protein>
    <recommendedName>
        <fullName evidence="5">LHFPL tetraspan subfamily member 2 protein</fullName>
    </recommendedName>
    <alternativeName>
        <fullName evidence="5">Lipoma HMGIC fusion partner-like 2 protein</fullName>
    </alternativeName>
</protein>
<organism>
    <name type="scientific">Homo sapiens</name>
    <name type="common">Human</name>
    <dbReference type="NCBI Taxonomy" id="9606"/>
    <lineage>
        <taxon>Eukaryota</taxon>
        <taxon>Metazoa</taxon>
        <taxon>Chordata</taxon>
        <taxon>Craniata</taxon>
        <taxon>Vertebrata</taxon>
        <taxon>Euteleostomi</taxon>
        <taxon>Mammalia</taxon>
        <taxon>Eutheria</taxon>
        <taxon>Euarchontoglires</taxon>
        <taxon>Primates</taxon>
        <taxon>Haplorrhini</taxon>
        <taxon>Catarrhini</taxon>
        <taxon>Hominidae</taxon>
        <taxon>Homo</taxon>
    </lineage>
</organism>
<accession>Q6ZUX7</accession>
<accession>B2RMQ6</accession>
<accession>Q7Z5P0</accession>
<accession>Q92605</accession>
<gene>
    <name evidence="5" type="primary">LHFPL2</name>
    <name type="synonym">KIAA0206</name>
</gene>
<dbReference type="EMBL" id="AK125227">
    <property type="protein sequence ID" value="BAC86089.1"/>
    <property type="molecule type" value="mRNA"/>
</dbReference>
<dbReference type="EMBL" id="AY309920">
    <property type="protein sequence ID" value="AAP74733.1"/>
    <property type="molecule type" value="mRNA"/>
</dbReference>
<dbReference type="EMBL" id="CH471084">
    <property type="protein sequence ID" value="EAW95818.1"/>
    <property type="molecule type" value="Genomic_DNA"/>
</dbReference>
<dbReference type="EMBL" id="BC136335">
    <property type="protein sequence ID" value="AAI36336.1"/>
    <property type="molecule type" value="mRNA"/>
</dbReference>
<dbReference type="EMBL" id="BC136336">
    <property type="protein sequence ID" value="AAI36337.1"/>
    <property type="molecule type" value="mRNA"/>
</dbReference>
<dbReference type="EMBL" id="D86961">
    <property type="protein sequence ID" value="BAA13197.1"/>
    <property type="molecule type" value="mRNA"/>
</dbReference>
<dbReference type="CCDS" id="CCDS4042.1"/>
<dbReference type="RefSeq" id="NP_005770.1">
    <property type="nucleotide sequence ID" value="NM_005779.3"/>
</dbReference>
<dbReference type="RefSeq" id="XP_006714578.1">
    <property type="nucleotide sequence ID" value="XM_006714515.3"/>
</dbReference>
<dbReference type="RefSeq" id="XP_024310089.1">
    <property type="nucleotide sequence ID" value="XM_024454321.2"/>
</dbReference>
<dbReference type="RefSeq" id="XP_047272562.1">
    <property type="nucleotide sequence ID" value="XM_047416606.1"/>
</dbReference>
<dbReference type="RefSeq" id="XP_054207372.1">
    <property type="nucleotide sequence ID" value="XM_054351397.1"/>
</dbReference>
<dbReference type="RefSeq" id="XP_054207373.1">
    <property type="nucleotide sequence ID" value="XM_054351398.1"/>
</dbReference>
<dbReference type="RefSeq" id="XP_054207374.1">
    <property type="nucleotide sequence ID" value="XM_054351399.1"/>
</dbReference>
<dbReference type="RefSeq" id="XP_054207375.1">
    <property type="nucleotide sequence ID" value="XM_054351400.1"/>
</dbReference>
<dbReference type="RefSeq" id="XP_054207376.1">
    <property type="nucleotide sequence ID" value="XM_054351401.1"/>
</dbReference>
<dbReference type="RefSeq" id="XP_054207377.1">
    <property type="nucleotide sequence ID" value="XM_054351402.1"/>
</dbReference>
<dbReference type="RefSeq" id="XP_054207378.1">
    <property type="nucleotide sequence ID" value="XM_054351403.1"/>
</dbReference>
<dbReference type="RefSeq" id="XP_054207379.1">
    <property type="nucleotide sequence ID" value="XM_054351404.1"/>
</dbReference>
<dbReference type="RefSeq" id="XP_054207380.1">
    <property type="nucleotide sequence ID" value="XM_054351405.1"/>
</dbReference>
<dbReference type="RefSeq" id="XP_054207381.1">
    <property type="nucleotide sequence ID" value="XM_054351406.1"/>
</dbReference>
<dbReference type="RefSeq" id="XP_054207382.1">
    <property type="nucleotide sequence ID" value="XM_054351407.1"/>
</dbReference>
<dbReference type="RefSeq" id="XP_054207383.1">
    <property type="nucleotide sequence ID" value="XM_054351408.1"/>
</dbReference>
<dbReference type="RefSeq" id="XP_054207384.1">
    <property type="nucleotide sequence ID" value="XM_054351409.1"/>
</dbReference>
<dbReference type="BioGRID" id="115482">
    <property type="interactions" value="26"/>
</dbReference>
<dbReference type="FunCoup" id="Q6ZUX7">
    <property type="interactions" value="162"/>
</dbReference>
<dbReference type="IntAct" id="Q6ZUX7">
    <property type="interactions" value="22"/>
</dbReference>
<dbReference type="STRING" id="9606.ENSP00000369702"/>
<dbReference type="iPTMnet" id="Q6ZUX7"/>
<dbReference type="PhosphoSitePlus" id="Q6ZUX7"/>
<dbReference type="SwissPalm" id="Q6ZUX7"/>
<dbReference type="BioMuta" id="LHFPL2"/>
<dbReference type="DMDM" id="116242618"/>
<dbReference type="jPOST" id="Q6ZUX7"/>
<dbReference type="MassIVE" id="Q6ZUX7"/>
<dbReference type="PaxDb" id="9606-ENSP00000369702"/>
<dbReference type="PeptideAtlas" id="Q6ZUX7"/>
<dbReference type="ProteomicsDB" id="68376"/>
<dbReference type="Pumba" id="Q6ZUX7"/>
<dbReference type="Antibodypedia" id="48435">
    <property type="antibodies" value="71 antibodies from 17 providers"/>
</dbReference>
<dbReference type="DNASU" id="10184"/>
<dbReference type="Ensembl" id="ENST00000380345.7">
    <property type="protein sequence ID" value="ENSP00000369702.2"/>
    <property type="gene ID" value="ENSG00000145685.14"/>
</dbReference>
<dbReference type="Ensembl" id="ENST00000515007.6">
    <property type="protein sequence ID" value="ENSP00000425906.1"/>
    <property type="gene ID" value="ENSG00000145685.14"/>
</dbReference>
<dbReference type="GeneID" id="10184"/>
<dbReference type="KEGG" id="hsa:10184"/>
<dbReference type="MANE-Select" id="ENST00000380345.7">
    <property type="protein sequence ID" value="ENSP00000369702.2"/>
    <property type="RefSeq nucleotide sequence ID" value="NM_005779.3"/>
    <property type="RefSeq protein sequence ID" value="NP_005770.1"/>
</dbReference>
<dbReference type="UCSC" id="uc003kfo.4">
    <property type="organism name" value="human"/>
</dbReference>
<dbReference type="AGR" id="HGNC:6588"/>
<dbReference type="CTD" id="10184"/>
<dbReference type="DisGeNET" id="10184"/>
<dbReference type="GeneCards" id="LHFPL2"/>
<dbReference type="HGNC" id="HGNC:6588">
    <property type="gene designation" value="LHFPL2"/>
</dbReference>
<dbReference type="HPA" id="ENSG00000145685">
    <property type="expression patterns" value="Low tissue specificity"/>
</dbReference>
<dbReference type="MIM" id="609718">
    <property type="type" value="gene"/>
</dbReference>
<dbReference type="neXtProt" id="NX_Q6ZUX7"/>
<dbReference type="OpenTargets" id="ENSG00000145685"/>
<dbReference type="PharmGKB" id="PA30360"/>
<dbReference type="VEuPathDB" id="HostDB:ENSG00000145685"/>
<dbReference type="eggNOG" id="KOG4026">
    <property type="taxonomic scope" value="Eukaryota"/>
</dbReference>
<dbReference type="GeneTree" id="ENSGT00990000203589"/>
<dbReference type="HOGENOM" id="CLU_084868_0_0_1"/>
<dbReference type="InParanoid" id="Q6ZUX7"/>
<dbReference type="OMA" id="PKWLVGP"/>
<dbReference type="OrthoDB" id="10048434at2759"/>
<dbReference type="PAN-GO" id="Q6ZUX7">
    <property type="GO annotations" value="1 GO annotation based on evolutionary models"/>
</dbReference>
<dbReference type="PhylomeDB" id="Q6ZUX7"/>
<dbReference type="TreeFam" id="TF321143"/>
<dbReference type="PathwayCommons" id="Q6ZUX7"/>
<dbReference type="Reactome" id="R-HSA-114608">
    <property type="pathway name" value="Platelet degranulation"/>
</dbReference>
<dbReference type="SignaLink" id="Q6ZUX7"/>
<dbReference type="BioGRID-ORCS" id="10184">
    <property type="hits" value="11 hits in 1154 CRISPR screens"/>
</dbReference>
<dbReference type="ChiTaRS" id="LHFPL2">
    <property type="organism name" value="human"/>
</dbReference>
<dbReference type="GeneWiki" id="LHFPL2"/>
<dbReference type="GenomeRNAi" id="10184"/>
<dbReference type="Pharos" id="Q6ZUX7">
    <property type="development level" value="Tdark"/>
</dbReference>
<dbReference type="PRO" id="PR:Q6ZUX7"/>
<dbReference type="Proteomes" id="UP000005640">
    <property type="component" value="Chromosome 5"/>
</dbReference>
<dbReference type="RNAct" id="Q6ZUX7">
    <property type="molecule type" value="protein"/>
</dbReference>
<dbReference type="Bgee" id="ENSG00000145685">
    <property type="expression patterns" value="Expressed in vena cava and 217 other cell types or tissues"/>
</dbReference>
<dbReference type="ExpressionAtlas" id="Q6ZUX7">
    <property type="expression patterns" value="baseline and differential"/>
</dbReference>
<dbReference type="GO" id="GO:0016020">
    <property type="term" value="C:membrane"/>
    <property type="evidence" value="ECO:0000318"/>
    <property type="project" value="GO_Central"/>
</dbReference>
<dbReference type="GO" id="GO:0005886">
    <property type="term" value="C:plasma membrane"/>
    <property type="evidence" value="ECO:0000304"/>
    <property type="project" value="Reactome"/>
</dbReference>
<dbReference type="GO" id="GO:0031092">
    <property type="term" value="C:platelet alpha granule membrane"/>
    <property type="evidence" value="ECO:0000304"/>
    <property type="project" value="Reactome"/>
</dbReference>
<dbReference type="GO" id="GO:0046545">
    <property type="term" value="P:development of primary female sexual characteristics"/>
    <property type="evidence" value="ECO:0000250"/>
    <property type="project" value="UniProtKB"/>
</dbReference>
<dbReference type="GO" id="GO:0046546">
    <property type="term" value="P:development of primary male sexual characteristics"/>
    <property type="evidence" value="ECO:0000250"/>
    <property type="project" value="UniProtKB"/>
</dbReference>
<dbReference type="GO" id="GO:1905516">
    <property type="term" value="P:positive regulation of fertilization"/>
    <property type="evidence" value="ECO:0000250"/>
    <property type="project" value="UniProtKB"/>
</dbReference>
<dbReference type="GO" id="GO:0007338">
    <property type="term" value="P:single fertilization"/>
    <property type="evidence" value="ECO:0007669"/>
    <property type="project" value="UniProtKB-KW"/>
</dbReference>
<dbReference type="FunFam" id="1.20.140.150:FF:000020">
    <property type="entry name" value="lipoma HMGIC fusion partner-like 2 protein"/>
    <property type="match status" value="1"/>
</dbReference>
<dbReference type="Gene3D" id="1.20.140.150">
    <property type="match status" value="1"/>
</dbReference>
<dbReference type="InterPro" id="IPR019372">
    <property type="entry name" value="LHFPL"/>
</dbReference>
<dbReference type="PANTHER" id="PTHR12489:SF19">
    <property type="entry name" value="LHFPL TETRASPAN SUBFAMILY MEMBER 2 PROTEIN"/>
    <property type="match status" value="1"/>
</dbReference>
<dbReference type="PANTHER" id="PTHR12489">
    <property type="entry name" value="LIPOMA HMGIC FUSION PARTNER-LIKE PROTEIN"/>
    <property type="match status" value="1"/>
</dbReference>
<dbReference type="Pfam" id="PF10242">
    <property type="entry name" value="L_HMGIC_fpl"/>
    <property type="match status" value="1"/>
</dbReference>
<keyword id="KW-0278">Fertilization</keyword>
<keyword id="KW-0472">Membrane</keyword>
<keyword id="KW-1267">Proteomics identification</keyword>
<keyword id="KW-1185">Reference proteome</keyword>
<keyword id="KW-0812">Transmembrane</keyword>
<keyword id="KW-1133">Transmembrane helix</keyword>
<feature type="chain" id="PRO_0000244763" description="LHFPL tetraspan subfamily member 2 protein">
    <location>
        <begin position="1"/>
        <end position="228"/>
    </location>
</feature>
<feature type="transmembrane region" description="Helical" evidence="2">
    <location>
        <begin position="11"/>
        <end position="31"/>
    </location>
</feature>
<feature type="transmembrane region" description="Helical" evidence="2">
    <location>
        <begin position="102"/>
        <end position="122"/>
    </location>
</feature>
<feature type="transmembrane region" description="Helical" evidence="2">
    <location>
        <begin position="132"/>
        <end position="152"/>
    </location>
</feature>
<feature type="transmembrane region" description="Helical" evidence="2">
    <location>
        <begin position="181"/>
        <end position="201"/>
    </location>
</feature>
<feature type="sequence variant" id="VAR_026913" description="In dbSNP:rs2303654.">
    <original>I</original>
    <variation>V</variation>
    <location>
        <position position="102"/>
    </location>
</feature>
<feature type="sequence conflict" description="In Ref. 1; BAC86089." evidence="4" ref="1">
    <original>I</original>
    <variation>T</variation>
    <location>
        <position position="35"/>
    </location>
</feature>
<sequence>MCHVIVTCRSMLWTLLSIVVAFAELIAFMSADWLIGKARSRGGVEPAGPGGGSPEPYHPTLGIYARCIRNPGVQHFQRDTLCGPYAESFGEIASGFWQATAIFLAVGIFILCMVALVSVFTMCVQSIMKKSIFNVCGLLQGIAGLFLILGLILYPAGWGCQKAIDYCGHYASAYKPGDCSLGWAFYTAIGGTVLTFICAVFSAQAEIATSSDKVQEEIEEGKNLICLL</sequence>
<reference key="1">
    <citation type="journal article" date="2004" name="Nat. Genet.">
        <title>Complete sequencing and characterization of 21,243 full-length human cDNAs.</title>
        <authorList>
            <person name="Ota T."/>
            <person name="Suzuki Y."/>
            <person name="Nishikawa T."/>
            <person name="Otsuki T."/>
            <person name="Sugiyama T."/>
            <person name="Irie R."/>
            <person name="Wakamatsu A."/>
            <person name="Hayashi K."/>
            <person name="Sato H."/>
            <person name="Nagai K."/>
            <person name="Kimura K."/>
            <person name="Makita H."/>
            <person name="Sekine M."/>
            <person name="Obayashi M."/>
            <person name="Nishi T."/>
            <person name="Shibahara T."/>
            <person name="Tanaka T."/>
            <person name="Ishii S."/>
            <person name="Yamamoto J."/>
            <person name="Saito K."/>
            <person name="Kawai Y."/>
            <person name="Isono Y."/>
            <person name="Nakamura Y."/>
            <person name="Nagahari K."/>
            <person name="Murakami K."/>
            <person name="Yasuda T."/>
            <person name="Iwayanagi T."/>
            <person name="Wagatsuma M."/>
            <person name="Shiratori A."/>
            <person name="Sudo H."/>
            <person name="Hosoiri T."/>
            <person name="Kaku Y."/>
            <person name="Kodaira H."/>
            <person name="Kondo H."/>
            <person name="Sugawara M."/>
            <person name="Takahashi M."/>
            <person name="Kanda K."/>
            <person name="Yokoi T."/>
            <person name="Furuya T."/>
            <person name="Kikkawa E."/>
            <person name="Omura Y."/>
            <person name="Abe K."/>
            <person name="Kamihara K."/>
            <person name="Katsuta N."/>
            <person name="Sato K."/>
            <person name="Tanikawa M."/>
            <person name="Yamazaki M."/>
            <person name="Ninomiya K."/>
            <person name="Ishibashi T."/>
            <person name="Yamashita H."/>
            <person name="Murakawa K."/>
            <person name="Fujimori K."/>
            <person name="Tanai H."/>
            <person name="Kimata M."/>
            <person name="Watanabe M."/>
            <person name="Hiraoka S."/>
            <person name="Chiba Y."/>
            <person name="Ishida S."/>
            <person name="Ono Y."/>
            <person name="Takiguchi S."/>
            <person name="Watanabe S."/>
            <person name="Yosida M."/>
            <person name="Hotuta T."/>
            <person name="Kusano J."/>
            <person name="Kanehori K."/>
            <person name="Takahashi-Fujii A."/>
            <person name="Hara H."/>
            <person name="Tanase T.-O."/>
            <person name="Nomura Y."/>
            <person name="Togiya S."/>
            <person name="Komai F."/>
            <person name="Hara R."/>
            <person name="Takeuchi K."/>
            <person name="Arita M."/>
            <person name="Imose N."/>
            <person name="Musashino K."/>
            <person name="Yuuki H."/>
            <person name="Oshima A."/>
            <person name="Sasaki N."/>
            <person name="Aotsuka S."/>
            <person name="Yoshikawa Y."/>
            <person name="Matsunawa H."/>
            <person name="Ichihara T."/>
            <person name="Shiohata N."/>
            <person name="Sano S."/>
            <person name="Moriya S."/>
            <person name="Momiyama H."/>
            <person name="Satoh N."/>
            <person name="Takami S."/>
            <person name="Terashima Y."/>
            <person name="Suzuki O."/>
            <person name="Nakagawa S."/>
            <person name="Senoh A."/>
            <person name="Mizoguchi H."/>
            <person name="Goto Y."/>
            <person name="Shimizu F."/>
            <person name="Wakebe H."/>
            <person name="Hishigaki H."/>
            <person name="Watanabe T."/>
            <person name="Sugiyama A."/>
            <person name="Takemoto M."/>
            <person name="Kawakami B."/>
            <person name="Yamazaki M."/>
            <person name="Watanabe K."/>
            <person name="Kumagai A."/>
            <person name="Itakura S."/>
            <person name="Fukuzumi Y."/>
            <person name="Fujimori Y."/>
            <person name="Komiyama M."/>
            <person name="Tashiro H."/>
            <person name="Tanigami A."/>
            <person name="Fujiwara T."/>
            <person name="Ono T."/>
            <person name="Yamada K."/>
            <person name="Fujii Y."/>
            <person name="Ozaki K."/>
            <person name="Hirao M."/>
            <person name="Ohmori Y."/>
            <person name="Kawabata A."/>
            <person name="Hikiji T."/>
            <person name="Kobatake N."/>
            <person name="Inagaki H."/>
            <person name="Ikema Y."/>
            <person name="Okamoto S."/>
            <person name="Okitani R."/>
            <person name="Kawakami T."/>
            <person name="Noguchi S."/>
            <person name="Itoh T."/>
            <person name="Shigeta K."/>
            <person name="Senba T."/>
            <person name="Matsumura K."/>
            <person name="Nakajima Y."/>
            <person name="Mizuno T."/>
            <person name="Morinaga M."/>
            <person name="Sasaki M."/>
            <person name="Togashi T."/>
            <person name="Oyama M."/>
            <person name="Hata H."/>
            <person name="Watanabe M."/>
            <person name="Komatsu T."/>
            <person name="Mizushima-Sugano J."/>
            <person name="Satoh T."/>
            <person name="Shirai Y."/>
            <person name="Takahashi Y."/>
            <person name="Nakagawa K."/>
            <person name="Okumura K."/>
            <person name="Nagase T."/>
            <person name="Nomura N."/>
            <person name="Kikuchi H."/>
            <person name="Masuho Y."/>
            <person name="Yamashita R."/>
            <person name="Nakai K."/>
            <person name="Yada T."/>
            <person name="Nakamura Y."/>
            <person name="Ohara O."/>
            <person name="Isogai T."/>
            <person name="Sugano S."/>
        </authorList>
    </citation>
    <scope>NUCLEOTIDE SEQUENCE [LARGE SCALE MRNA]</scope>
</reference>
<reference key="2">
    <citation type="submission" date="2003-05" db="EMBL/GenBank/DDBJ databases">
        <authorList>
            <person name="Huang C.Q."/>
            <person name="Wu S.L."/>
            <person name="Chen Z."/>
            <person name="Shan Y.X."/>
            <person name="Liu S."/>
        </authorList>
    </citation>
    <scope>NUCLEOTIDE SEQUENCE [LARGE SCALE MRNA]</scope>
</reference>
<reference key="3">
    <citation type="submission" date="2005-07" db="EMBL/GenBank/DDBJ databases">
        <authorList>
            <person name="Mural R.J."/>
            <person name="Istrail S."/>
            <person name="Sutton G.G."/>
            <person name="Florea L."/>
            <person name="Halpern A.L."/>
            <person name="Mobarry C.M."/>
            <person name="Lippert R."/>
            <person name="Walenz B."/>
            <person name="Shatkay H."/>
            <person name="Dew I."/>
            <person name="Miller J.R."/>
            <person name="Flanigan M.J."/>
            <person name="Edwards N.J."/>
            <person name="Bolanos R."/>
            <person name="Fasulo D."/>
            <person name="Halldorsson B.V."/>
            <person name="Hannenhalli S."/>
            <person name="Turner R."/>
            <person name="Yooseph S."/>
            <person name="Lu F."/>
            <person name="Nusskern D.R."/>
            <person name="Shue B.C."/>
            <person name="Zheng X.H."/>
            <person name="Zhong F."/>
            <person name="Delcher A.L."/>
            <person name="Huson D.H."/>
            <person name="Kravitz S.A."/>
            <person name="Mouchard L."/>
            <person name="Reinert K."/>
            <person name="Remington K.A."/>
            <person name="Clark A.G."/>
            <person name="Waterman M.S."/>
            <person name="Eichler E.E."/>
            <person name="Adams M.D."/>
            <person name="Hunkapiller M.W."/>
            <person name="Myers E.W."/>
            <person name="Venter J.C."/>
        </authorList>
    </citation>
    <scope>NUCLEOTIDE SEQUENCE [LARGE SCALE GENOMIC DNA]</scope>
</reference>
<reference key="4">
    <citation type="journal article" date="2004" name="Genome Res.">
        <title>The status, quality, and expansion of the NIH full-length cDNA project: the Mammalian Gene Collection (MGC).</title>
        <authorList>
            <consortium name="The MGC Project Team"/>
        </authorList>
    </citation>
    <scope>NUCLEOTIDE SEQUENCE [LARGE SCALE MRNA]</scope>
    <source>
        <tissue>Brain</tissue>
    </source>
</reference>
<reference key="5">
    <citation type="journal article" date="1996" name="DNA Res.">
        <title>Prediction of the coding sequences of unidentified human genes. VI. The coding sequences of 80 new genes (KIAA0201-KIAA0280) deduced by analysis of cDNA clones from cell line KG-1 and brain.</title>
        <authorList>
            <person name="Nagase T."/>
            <person name="Seki N."/>
            <person name="Ishikawa K."/>
            <person name="Ohira M."/>
            <person name="Kawarabayasi Y."/>
            <person name="Ohara O."/>
            <person name="Tanaka A."/>
            <person name="Kotani H."/>
            <person name="Miyajima N."/>
            <person name="Nomura N."/>
        </authorList>
    </citation>
    <scope>NUCLEOTIDE SEQUENCE [LARGE SCALE MRNA] OF 36-228</scope>
    <scope>TISSUE SPECIFICITY</scope>
</reference>